<dbReference type="EC" id="3.5.1.28"/>
<dbReference type="EC" id="3.2.1.96"/>
<dbReference type="EMBL" id="U71377">
    <property type="protein sequence ID" value="AAB63571.1"/>
    <property type="molecule type" value="Genomic_DNA"/>
</dbReference>
<dbReference type="PIR" id="T30211">
    <property type="entry name" value="T30211"/>
</dbReference>
<dbReference type="RefSeq" id="WP_001831665.1">
    <property type="nucleotide sequence ID" value="NZ_WJUN01000008.1"/>
</dbReference>
<dbReference type="PDB" id="3LAT">
    <property type="method" value="X-ray"/>
    <property type="resolution" value="1.70 A"/>
    <property type="chains" value="A/B=303-515"/>
</dbReference>
<dbReference type="PDB" id="4EPC">
    <property type="method" value="X-ray"/>
    <property type="resolution" value="2.90 A"/>
    <property type="chains" value="A=516-847"/>
</dbReference>
<dbReference type="PDB" id="7KWI">
    <property type="method" value="NMR"/>
    <property type="chains" value="A=696-847"/>
</dbReference>
<dbReference type="PDBsum" id="3LAT"/>
<dbReference type="PDBsum" id="4EPC"/>
<dbReference type="PDBsum" id="7KWI"/>
<dbReference type="SMR" id="O33635"/>
<dbReference type="CAZy" id="GH73">
    <property type="family name" value="Glycoside Hydrolase Family 73"/>
</dbReference>
<dbReference type="OrthoDB" id="9816557at2"/>
<dbReference type="EvolutionaryTrace" id="O33635"/>
<dbReference type="GO" id="GO:0005576">
    <property type="term" value="C:extracellular region"/>
    <property type="evidence" value="ECO:0007669"/>
    <property type="project" value="UniProtKB-SubCell"/>
</dbReference>
<dbReference type="GO" id="GO:0004040">
    <property type="term" value="F:amidase activity"/>
    <property type="evidence" value="ECO:0007669"/>
    <property type="project" value="InterPro"/>
</dbReference>
<dbReference type="GO" id="GO:0033925">
    <property type="term" value="F:mannosyl-glycoprotein endo-beta-N-acetylglucosaminidase activity"/>
    <property type="evidence" value="ECO:0007669"/>
    <property type="project" value="UniProtKB-EC"/>
</dbReference>
<dbReference type="GO" id="GO:0008745">
    <property type="term" value="F:N-acetylmuramoyl-L-alanine amidase activity"/>
    <property type="evidence" value="ECO:0007669"/>
    <property type="project" value="UniProtKB-EC"/>
</dbReference>
<dbReference type="GO" id="GO:0071555">
    <property type="term" value="P:cell wall organization"/>
    <property type="evidence" value="ECO:0007669"/>
    <property type="project" value="UniProtKB-KW"/>
</dbReference>
<dbReference type="GO" id="GO:0009253">
    <property type="term" value="P:peptidoglycan catabolic process"/>
    <property type="evidence" value="ECO:0007669"/>
    <property type="project" value="InterPro"/>
</dbReference>
<dbReference type="CDD" id="cd06583">
    <property type="entry name" value="PGRP"/>
    <property type="match status" value="1"/>
</dbReference>
<dbReference type="FunFam" id="2.30.30.170:FF:000002">
    <property type="entry name" value="Bifunctional autolysin"/>
    <property type="match status" value="1"/>
</dbReference>
<dbReference type="Gene3D" id="2.30.30.170">
    <property type="match status" value="7"/>
</dbReference>
<dbReference type="Gene3D" id="3.40.80.10">
    <property type="entry name" value="Peptidoglycan recognition protein-like"/>
    <property type="match status" value="1"/>
</dbReference>
<dbReference type="InterPro" id="IPR036505">
    <property type="entry name" value="Amidase/PGRP_sf"/>
</dbReference>
<dbReference type="InterPro" id="IPR002502">
    <property type="entry name" value="Amidase_domain"/>
</dbReference>
<dbReference type="InterPro" id="IPR025987">
    <property type="entry name" value="GW_dom"/>
</dbReference>
<dbReference type="InterPro" id="IPR038200">
    <property type="entry name" value="GW_dom_sf"/>
</dbReference>
<dbReference type="InterPro" id="IPR002901">
    <property type="entry name" value="MGlyc_endo_b_GlcNAc-like_dom"/>
</dbReference>
<dbReference type="Pfam" id="PF01510">
    <property type="entry name" value="Amidase_2"/>
    <property type="match status" value="1"/>
</dbReference>
<dbReference type="Pfam" id="PF01832">
    <property type="entry name" value="Glucosaminidase"/>
    <property type="match status" value="1"/>
</dbReference>
<dbReference type="Pfam" id="PF13457">
    <property type="entry name" value="GW"/>
    <property type="match status" value="6"/>
</dbReference>
<dbReference type="SMART" id="SM00644">
    <property type="entry name" value="Ami_2"/>
    <property type="match status" value="1"/>
</dbReference>
<dbReference type="SMART" id="SM00047">
    <property type="entry name" value="LYZ2"/>
    <property type="match status" value="1"/>
</dbReference>
<dbReference type="SUPFAM" id="SSF55846">
    <property type="entry name" value="N-acetylmuramoyl-L-alanine amidase-like"/>
    <property type="match status" value="1"/>
</dbReference>
<dbReference type="PROSITE" id="PS51780">
    <property type="entry name" value="GW"/>
    <property type="match status" value="7"/>
</dbReference>
<accession>O33635</accession>
<proteinExistence type="evidence at protein level"/>
<organism>
    <name type="scientific">Staphylococcus epidermidis</name>
    <dbReference type="NCBI Taxonomy" id="1282"/>
    <lineage>
        <taxon>Bacteria</taxon>
        <taxon>Bacillati</taxon>
        <taxon>Bacillota</taxon>
        <taxon>Bacilli</taxon>
        <taxon>Bacillales</taxon>
        <taxon>Staphylococcaceae</taxon>
        <taxon>Staphylococcus</taxon>
    </lineage>
</organism>
<protein>
    <recommendedName>
        <fullName>Bifunctional autolysin</fullName>
    </recommendedName>
    <alternativeName>
        <fullName>AtlE</fullName>
    </alternativeName>
    <domain>
        <recommendedName>
            <fullName>N-acetylmuramoyl-L-alanine amidase</fullName>
            <ecNumber>3.5.1.28</ecNumber>
        </recommendedName>
    </domain>
    <domain>
        <recommendedName>
            <fullName>Mannosyl-glycoprotein endo-beta-N-acetylglucosaminidase</fullName>
            <ecNumber>3.2.1.96</ecNumber>
        </recommendedName>
    </domain>
</protein>
<evidence type="ECO:0000250" key="1"/>
<evidence type="ECO:0000255" key="2"/>
<evidence type="ECO:0000255" key="3">
    <source>
        <dbReference type="PROSITE-ProRule" id="PRU01116"/>
    </source>
</evidence>
<evidence type="ECO:0000256" key="4">
    <source>
        <dbReference type="SAM" id="MobiDB-lite"/>
    </source>
</evidence>
<evidence type="ECO:0000269" key="5">
    <source>
    </source>
</evidence>
<evidence type="ECO:0000305" key="6"/>
<evidence type="ECO:0007829" key="7">
    <source>
        <dbReference type="PDB" id="3LAT"/>
    </source>
</evidence>
<evidence type="ECO:0007829" key="8">
    <source>
        <dbReference type="PDB" id="4EPC"/>
    </source>
</evidence>
<evidence type="ECO:0007829" key="9">
    <source>
        <dbReference type="PDB" id="7KWI"/>
    </source>
</evidence>
<name>ATL_STAEP</name>
<sequence>MAKKFNYKLPSMVALTLFGTAFTAHQANAAEQPQNQSNHKNVLDDQTALKQAEKAKSEVTQSTTNVSGTQTYQDPTQVQPKQDTQSTTYDASLDEMSTYNEISSNQKQQSLSTDDANQNQTNSVTKNQQEETNDLTQEDKTSTDTNQLQETQSVAKENEKDLGANANNEQQDKKMTASQPSENQAIETQTASNDNESQQKSQQVTSEQNETATPKVSNTNASGYNFDYDDEDDDSSTDHLEPISLNNVNATSKQTTSYKYKEPAQRVTTNTVKKETASNQATIDTKQFTPFSATAQPRTVYSVSSQKTSSLPKYTPKVNSSINNYIRKKNMKAPRIEEDYTSYFPKYGYRNGVGRPEGIVVHDTANDNSTIDGEIAFMKRNYTNAFVHAFVDGNRIIETAPTDYLSWGAGPYGNQRFINVEIVHTHDYDSFARSMNNYADYAATQLQYYNLKPDSAENDGRGTVWTHAAISNFLGGTDHADPHQYLRSHNYSYAELYDLIYEKYLIKTKQVAPWGTTSTKPSQPSKPSGGTNNKLTVSANRGVAQIKPTNNGLYTTVYDSKGHKTDQVQKTLSVTKTATLGNNKFYLVEDYNSGKKYGWVKQGDVVYNTAKAPVKVNQTYNVKAGSTLYTVPWGTPKQVASKVSGTGNQTFKATKQQQIDKATYLYGTVNGKSGWISKYYLTTASKPSNPTKPSTNNQLTVTNNSGVAQINAKNSGLYTTVYDTKGKTTNQIQRTLSVTKAATLGDKKFYLVGDYNTGTNYGWVKQDEVIYNTAKSPVKINQTYNVKPGVKLHTVPWGTYNQVAGTVSGKGDQTFKATKQQQIDKATYLYGTVNGKSGWISKYYLTAPSKVQALSTQSTPAPKQVKPSTQTVNQIAQVKANNSGIRASVYDKTAKSGTKYANRTFLINKQRTQGNNTYVLLQDGTSNTPLGWVNINDVTTQNIGKQTQSIGKYSVKPTNNGLYSIAWGTKNQQLLAPNTLANQAFNASKAVYVGKDLYLYGTVNNRTGWIAAKDLIQNSTDAQSTPYNYTFVINNSKSYFYMDPTKANRYSLKPYYEQTFTVIKQKNINGVKWYYGQLLDGKYVWIKSTDLVKEKIKYAYTGMTLNNAINIQSRLKYKPQVQNEPLKWSNANYSQIKNAMDTKRLANDSSLKYQFLRLDQPQYLSAQALNKLLKGKGVLENQGAAFSQAARKYGLNEIYLISHALVETGNGTSQLAKGGDVSKGKFTTKTGHKYHNVFGIGAFDNNALVDGIKYAKNAGWTSVSKAIIGGAKFIGNSYVKAGQNTLYKMRWNPANPGTHQYATDINWANVNAQVLKQFYDKIGEVGKYFEIPTYK</sequence>
<reference key="1">
    <citation type="journal article" date="1997" name="Mol. Microbiol.">
        <title>Evidence for autolysin-mediated primary attachment of Staphylococcus epidermidis to a polystyrene surface.</title>
        <authorList>
            <person name="Heilmann C."/>
            <person name="Hussain M."/>
            <person name="Peters G."/>
            <person name="Goetz F."/>
        </authorList>
    </citation>
    <scope>NUCLEOTIDE SEQUENCE [GENOMIC DNA]</scope>
    <scope>PROTEIN SEQUENCE OF 303-312</scope>
    <scope>SUBCELLULAR LOCATION</scope>
    <scope>INVOLVEMENT IN BIOFILM FORMATION</scope>
    <source>
        <strain>O47</strain>
    </source>
</reference>
<feature type="signal peptide" evidence="2">
    <location>
        <begin position="1"/>
        <end position="29"/>
    </location>
</feature>
<feature type="chain" id="PRO_0000045479" description="Bifunctional autolysin">
    <location>
        <begin position="30"/>
        <end position="1335"/>
    </location>
</feature>
<feature type="domain" description="GW 1" evidence="3">
    <location>
        <begin position="533"/>
        <end position="610"/>
    </location>
</feature>
<feature type="domain" description="GW 2" evidence="3">
    <location>
        <begin position="612"/>
        <end position="686"/>
    </location>
</feature>
<feature type="domain" description="GW 3" evidence="3">
    <location>
        <begin position="700"/>
        <end position="774"/>
    </location>
</feature>
<feature type="domain" description="GW 4" evidence="3">
    <location>
        <begin position="776"/>
        <end position="850"/>
    </location>
</feature>
<feature type="domain" description="GW 5" evidence="3">
    <location>
        <begin position="868"/>
        <end position="943"/>
    </location>
</feature>
<feature type="domain" description="GW 6" evidence="3">
    <location>
        <begin position="945"/>
        <end position="1020"/>
    </location>
</feature>
<feature type="domain" description="GW 7" evidence="3">
    <location>
        <begin position="1023"/>
        <end position="1096"/>
    </location>
</feature>
<feature type="region of interest" description="Disordered" evidence="4">
    <location>
        <begin position="51"/>
        <end position="88"/>
    </location>
</feature>
<feature type="region of interest" description="Disordered" evidence="4">
    <location>
        <begin position="100"/>
        <end position="262"/>
    </location>
</feature>
<feature type="region of interest" description="N-acetylmuramoyl-L-alanine amidase">
    <location>
        <begin position="303"/>
        <end position="863"/>
    </location>
</feature>
<feature type="region of interest" description="Disordered" evidence="4">
    <location>
        <begin position="514"/>
        <end position="535"/>
    </location>
</feature>
<feature type="region of interest" description="Endo-beta-N-acetylglucosaminidase">
    <location>
        <begin position="864"/>
        <end position="1335"/>
    </location>
</feature>
<feature type="compositionally biased region" description="Polar residues" evidence="4">
    <location>
        <begin position="58"/>
        <end position="88"/>
    </location>
</feature>
<feature type="compositionally biased region" description="Polar residues" evidence="4">
    <location>
        <begin position="100"/>
        <end position="127"/>
    </location>
</feature>
<feature type="compositionally biased region" description="Polar residues" evidence="4">
    <location>
        <begin position="143"/>
        <end position="155"/>
    </location>
</feature>
<feature type="compositionally biased region" description="Polar residues" evidence="4">
    <location>
        <begin position="176"/>
        <end position="223"/>
    </location>
</feature>
<feature type="compositionally biased region" description="Polar residues" evidence="4">
    <location>
        <begin position="244"/>
        <end position="258"/>
    </location>
</feature>
<feature type="compositionally biased region" description="Low complexity" evidence="4">
    <location>
        <begin position="515"/>
        <end position="531"/>
    </location>
</feature>
<feature type="helix" evidence="7">
    <location>
        <begin position="321"/>
        <end position="328"/>
    </location>
</feature>
<feature type="strand" evidence="7">
    <location>
        <begin position="336"/>
        <end position="338"/>
    </location>
</feature>
<feature type="strand" evidence="7">
    <location>
        <begin position="358"/>
        <end position="363"/>
    </location>
</feature>
<feature type="helix" evidence="7">
    <location>
        <begin position="371"/>
        <end position="380"/>
    </location>
</feature>
<feature type="turn" evidence="7">
    <location>
        <begin position="381"/>
        <end position="384"/>
    </location>
</feature>
<feature type="strand" evidence="7">
    <location>
        <begin position="388"/>
        <end position="391"/>
    </location>
</feature>
<feature type="strand" evidence="7">
    <location>
        <begin position="396"/>
        <end position="398"/>
    </location>
</feature>
<feature type="strand" evidence="7">
    <location>
        <begin position="407"/>
        <end position="409"/>
    </location>
</feature>
<feature type="helix" evidence="7">
    <location>
        <begin position="410"/>
        <end position="414"/>
    </location>
</feature>
<feature type="strand" evidence="7">
    <location>
        <begin position="417"/>
        <end position="422"/>
    </location>
</feature>
<feature type="helix" evidence="7">
    <location>
        <begin position="428"/>
        <end position="448"/>
    </location>
</feature>
<feature type="turn" evidence="7">
    <location>
        <begin position="457"/>
        <end position="459"/>
    </location>
</feature>
<feature type="strand" evidence="7">
    <location>
        <begin position="462"/>
        <end position="466"/>
    </location>
</feature>
<feature type="helix" evidence="7">
    <location>
        <begin position="467"/>
        <end position="473"/>
    </location>
</feature>
<feature type="helix" evidence="7">
    <location>
        <begin position="483"/>
        <end position="488"/>
    </location>
</feature>
<feature type="helix" evidence="7">
    <location>
        <begin position="493"/>
        <end position="507"/>
    </location>
</feature>
<feature type="strand" evidence="8">
    <location>
        <begin position="699"/>
        <end position="701"/>
    </location>
</feature>
<feature type="strand" evidence="8">
    <location>
        <begin position="706"/>
        <end position="710"/>
    </location>
</feature>
<feature type="strand" evidence="8">
    <location>
        <begin position="717"/>
        <end position="720"/>
    </location>
</feature>
<feature type="strand" evidence="8">
    <location>
        <begin position="736"/>
        <end position="744"/>
    </location>
</feature>
<feature type="strand" evidence="8">
    <location>
        <begin position="750"/>
        <end position="753"/>
    </location>
</feature>
<feature type="turn" evidence="8">
    <location>
        <begin position="755"/>
        <end position="757"/>
    </location>
</feature>
<feature type="strand" evidence="8">
    <location>
        <begin position="760"/>
        <end position="764"/>
    </location>
</feature>
<feature type="helix" evidence="9">
    <location>
        <begin position="766"/>
        <end position="768"/>
    </location>
</feature>
<feature type="strand" evidence="8">
    <location>
        <begin position="769"/>
        <end position="775"/>
    </location>
</feature>
<feature type="strand" evidence="8">
    <location>
        <begin position="782"/>
        <end position="786"/>
    </location>
</feature>
<feature type="strand" evidence="8">
    <location>
        <begin position="793"/>
        <end position="795"/>
    </location>
</feature>
<feature type="helix" evidence="8">
    <location>
        <begin position="800"/>
        <end position="802"/>
    </location>
</feature>
<feature type="strand" evidence="8">
    <location>
        <begin position="809"/>
        <end position="811"/>
    </location>
</feature>
<feature type="strand" evidence="8">
    <location>
        <begin position="813"/>
        <end position="823"/>
    </location>
</feature>
<feature type="strand" evidence="8">
    <location>
        <begin position="827"/>
        <end position="833"/>
    </location>
</feature>
<feature type="strand" evidence="8">
    <location>
        <begin position="836"/>
        <end position="841"/>
    </location>
</feature>
<feature type="turn" evidence="9">
    <location>
        <begin position="842"/>
        <end position="844"/>
    </location>
</feature>
<comment type="function">
    <text evidence="1">Endohydrolysis of the di-N-acetylchitobiosyl unit in high-mannose glycopeptides and glycoproteins containing the -[(Man)5(GlcNAc)2]-Asn structure. One N-acetyl-D-glucosamine residue remains attached to the protein; the rest of the oligosaccharide is released intact. Cleaves the peptidoglycan connecting the daughter cells at the end of the cell division cycle, resulting in the separation of the two newly divided cells. Acts as an autolysin in penicillin-induced lysis (By similarity). As a bacterial surface-associated protein, mediates attachment to polystyrene surfaces, contributing to biofilm formation. Also has vitronectin-binding activity.</text>
</comment>
<comment type="catalytic activity">
    <reaction>
        <text>Hydrolyzes the link between N-acetylmuramoyl residues and L-amino acid residues in certain cell-wall glycopeptides.</text>
        <dbReference type="EC" id="3.5.1.28"/>
    </reaction>
</comment>
<comment type="catalytic activity">
    <reaction>
        <text>an N(4)-(oligosaccharide-(1-&gt;3)-[oligosaccharide-(1-&gt;6)]-beta-D-Man-(1-&gt;4)-beta-D-GlcNAc-(1-&gt;4)-alpha-D-GlcNAc)-L-asparaginyl-[protein] + H2O = an oligosaccharide-(1-&gt;3)-[oligosaccharide-(1-&gt;6)]-beta-D-Man-(1-&gt;4)-D-GlcNAc + N(4)-(N-acetyl-beta-D-glucosaminyl)-L-asparaginyl-[protein]</text>
        <dbReference type="Rhea" id="RHEA:73067"/>
        <dbReference type="Rhea" id="RHEA-COMP:12603"/>
        <dbReference type="Rhea" id="RHEA-COMP:18176"/>
        <dbReference type="ChEBI" id="CHEBI:15377"/>
        <dbReference type="ChEBI" id="CHEBI:132248"/>
        <dbReference type="ChEBI" id="CHEBI:192714"/>
        <dbReference type="ChEBI" id="CHEBI:192715"/>
        <dbReference type="EC" id="3.2.1.96"/>
    </reaction>
</comment>
<comment type="subunit">
    <text evidence="1">Oligomer; forms a ring structure at the cell surface which is important for efficient partitioning of daughter cells after cell division.</text>
</comment>
<comment type="subcellular location">
    <subcellularLocation>
        <location evidence="5">Secreted</location>
    </subcellularLocation>
    <text>Secreted, and then anchored on the cell surface at the peripheral cell wall above the completed septum (septal region), for the next cell division cycle.</text>
</comment>
<comment type="domain">
    <text evidence="1">The GW domains are responsible for directing the proteins to the septal region.</text>
</comment>
<comment type="PTM">
    <text evidence="1">Undergoes proteolytic processing to generate the two extracellular lytic enzymes, probably at the septal region on the cell surface.</text>
</comment>
<comment type="similarity">
    <text evidence="6">In the N-terminal section; belongs to the N-acetylmuramoyl-L-alanine amidase 2 family.</text>
</comment>
<comment type="similarity">
    <text evidence="6">In the C-terminal section; belongs to the glycosyl hydrolase 73 family.</text>
</comment>
<gene>
    <name type="primary">atl</name>
    <name type="synonym">atlE</name>
</gene>
<keyword id="KW-0002">3D-structure</keyword>
<keyword id="KW-0961">Cell wall biogenesis/degradation</keyword>
<keyword id="KW-0903">Direct protein sequencing</keyword>
<keyword id="KW-0378">Hydrolase</keyword>
<keyword id="KW-0511">Multifunctional enzyme</keyword>
<keyword id="KW-0677">Repeat</keyword>
<keyword id="KW-0964">Secreted</keyword>
<keyword id="KW-0732">Signal</keyword>